<evidence type="ECO:0000305" key="1"/>
<feature type="chain" id="PRO_0000169346" description="Uncharacterized protein YqeH">
    <location>
        <begin position="1"/>
        <end position="210"/>
    </location>
</feature>
<keyword id="KW-1185">Reference proteome</keyword>
<sequence>MGLCSRYKSLTCNSCSMHCQIMPEESPRLQYCANSCFCMWPEESSYFNRGVVEGILTKNHNARLSGYIFVDFSVSFLRLFLEKDWIDYLASTDMGIVLVSDRNMQSLANYWRKHNSAISAVIYNDDGLDVANEKIRQLFIGRYLSFTGGNTLTQMEFTIMGYMVSGYNPYQIAEVLDMDIRSIYAYKQRIEKRMGGKINELFIRSHSVQH</sequence>
<reference key="1">
    <citation type="journal article" date="1997" name="Science">
        <title>The complete genome sequence of Escherichia coli K-12.</title>
        <authorList>
            <person name="Blattner F.R."/>
            <person name="Plunkett G. III"/>
            <person name="Bloch C.A."/>
            <person name="Perna N.T."/>
            <person name="Burland V."/>
            <person name="Riley M."/>
            <person name="Collado-Vides J."/>
            <person name="Glasner J.D."/>
            <person name="Rode C.K."/>
            <person name="Mayhew G.F."/>
            <person name="Gregor J."/>
            <person name="Davis N.W."/>
            <person name="Kirkpatrick H.A."/>
            <person name="Goeden M.A."/>
            <person name="Rose D.J."/>
            <person name="Mau B."/>
            <person name="Shao Y."/>
        </authorList>
    </citation>
    <scope>NUCLEOTIDE SEQUENCE [LARGE SCALE GENOMIC DNA]</scope>
    <source>
        <strain>K12 / MG1655 / ATCC 47076</strain>
    </source>
</reference>
<reference key="2">
    <citation type="journal article" date="2006" name="Mol. Syst. Biol.">
        <title>Highly accurate genome sequences of Escherichia coli K-12 strains MG1655 and W3110.</title>
        <authorList>
            <person name="Hayashi K."/>
            <person name="Morooka N."/>
            <person name="Yamamoto Y."/>
            <person name="Fujita K."/>
            <person name="Isono K."/>
            <person name="Choi S."/>
            <person name="Ohtsubo E."/>
            <person name="Baba T."/>
            <person name="Wanner B.L."/>
            <person name="Mori H."/>
            <person name="Horiuchi T."/>
        </authorList>
    </citation>
    <scope>NUCLEOTIDE SEQUENCE [LARGE SCALE GENOMIC DNA]</scope>
    <source>
        <strain>K12 / W3110 / ATCC 27325 / DSM 5911</strain>
    </source>
</reference>
<accession>Q46941</accession>
<accession>Q2M9Z1</accession>
<protein>
    <recommendedName>
        <fullName>Uncharacterized protein YqeH</fullName>
    </recommendedName>
</protein>
<proteinExistence type="predicted"/>
<name>YQEH_ECOLI</name>
<organism>
    <name type="scientific">Escherichia coli (strain K12)</name>
    <dbReference type="NCBI Taxonomy" id="83333"/>
    <lineage>
        <taxon>Bacteria</taxon>
        <taxon>Pseudomonadati</taxon>
        <taxon>Pseudomonadota</taxon>
        <taxon>Gammaproteobacteria</taxon>
        <taxon>Enterobacterales</taxon>
        <taxon>Enterobacteriaceae</taxon>
        <taxon>Escherichia</taxon>
    </lineage>
</organism>
<gene>
    <name type="primary">yqeH</name>
    <name type="ordered locus">b2846</name>
    <name type="ordered locus">JW5454</name>
</gene>
<comment type="similarity">
    <text evidence="1">To E.coli YkgK.</text>
</comment>
<comment type="sequence caution" evidence="1">
    <conflict type="erroneous initiation">
        <sequence resource="EMBL-CDS" id="AAB40493"/>
    </conflict>
    <text>Extended N-terminus.</text>
</comment>
<dbReference type="EMBL" id="U29581">
    <property type="protein sequence ID" value="AAB40493.1"/>
    <property type="status" value="ALT_INIT"/>
    <property type="molecule type" value="Genomic_DNA"/>
</dbReference>
<dbReference type="EMBL" id="U00096">
    <property type="protein sequence ID" value="AAC75885.2"/>
    <property type="molecule type" value="Genomic_DNA"/>
</dbReference>
<dbReference type="EMBL" id="AP009048">
    <property type="protein sequence ID" value="BAE76915.1"/>
    <property type="molecule type" value="Genomic_DNA"/>
</dbReference>
<dbReference type="RefSeq" id="NP_417323.2">
    <property type="nucleotide sequence ID" value="NC_000913.3"/>
</dbReference>
<dbReference type="RefSeq" id="WP_001336169.1">
    <property type="nucleotide sequence ID" value="NZ_LN832404.1"/>
</dbReference>
<dbReference type="SMR" id="Q46941"/>
<dbReference type="BioGRID" id="4261149">
    <property type="interactions" value="113"/>
</dbReference>
<dbReference type="BioGRID" id="849644">
    <property type="interactions" value="2"/>
</dbReference>
<dbReference type="FunCoup" id="Q46941">
    <property type="interactions" value="3"/>
</dbReference>
<dbReference type="IntAct" id="Q46941">
    <property type="interactions" value="2"/>
</dbReference>
<dbReference type="STRING" id="511145.b2846"/>
<dbReference type="PaxDb" id="511145-b2846"/>
<dbReference type="EnsemblBacteria" id="AAC75885">
    <property type="protein sequence ID" value="AAC75885"/>
    <property type="gene ID" value="b2846"/>
</dbReference>
<dbReference type="GeneID" id="945263"/>
<dbReference type="KEGG" id="ecj:JW5454"/>
<dbReference type="KEGG" id="eco:b2846"/>
<dbReference type="KEGG" id="ecoc:C3026_15625"/>
<dbReference type="PATRIC" id="fig|511145.12.peg.2944"/>
<dbReference type="EchoBASE" id="EB2902"/>
<dbReference type="eggNOG" id="COG2771">
    <property type="taxonomic scope" value="Bacteria"/>
</dbReference>
<dbReference type="HOGENOM" id="CLU_088924_0_0_6"/>
<dbReference type="InParanoid" id="Q46941"/>
<dbReference type="OMA" id="NSGMHIV"/>
<dbReference type="OrthoDB" id="6609920at2"/>
<dbReference type="PhylomeDB" id="Q46941"/>
<dbReference type="BioCyc" id="EcoCyc:G7466-MONOMER"/>
<dbReference type="PHI-base" id="PHI:123020"/>
<dbReference type="PHI-base" id="PHI:123021"/>
<dbReference type="PHI-base" id="PHI:123132"/>
<dbReference type="PRO" id="PR:Q46941"/>
<dbReference type="Proteomes" id="UP000000625">
    <property type="component" value="Chromosome"/>
</dbReference>
<dbReference type="GO" id="GO:0003677">
    <property type="term" value="F:DNA binding"/>
    <property type="evidence" value="ECO:0007669"/>
    <property type="project" value="InterPro"/>
</dbReference>
<dbReference type="GO" id="GO:0006355">
    <property type="term" value="P:regulation of DNA-templated transcription"/>
    <property type="evidence" value="ECO:0007669"/>
    <property type="project" value="InterPro"/>
</dbReference>
<dbReference type="InterPro" id="IPR016032">
    <property type="entry name" value="Sig_transdc_resp-reg_C-effctor"/>
</dbReference>
<dbReference type="SUPFAM" id="SSF46894">
    <property type="entry name" value="C-terminal effector domain of the bipartite response regulators"/>
    <property type="match status" value="1"/>
</dbReference>